<accession>Q4WHG5</accession>
<sequence>MSPSATDTTEVMDPTILTLRKVLTSESEPLGRRFRALFSLKHLACLQPPTEKTLPAIQAIAAAFTSPSALLKHELAYCLGQTRNPASLPFLQQVAKDTEQDTMCRHEAAEALGALGYEDSLEILKALRDNQNEPEVIRETCDIAVDRILWENSEARKAEKLKTSDFTSIDPAPPLPMTASEPSIPEIEQTLLDTSLPLFLRYRAMFALRDLASPPDLPTATRAVEALAKGLKDPSALFRHEIAFVFGQLCHPASIPSLTEALSNQSEAGMVRHEAAEALGSLGDYEGVEETLRKFLNDPEQVVRDSVIVALDMAEYEKNGEVEYALVPDAGVAAA</sequence>
<evidence type="ECO:0000255" key="1">
    <source>
        <dbReference type="HAMAP-Rule" id="MF_03101"/>
    </source>
</evidence>
<evidence type="ECO:0000305" key="2"/>
<organism>
    <name type="scientific">Aspergillus fumigatus (strain ATCC MYA-4609 / CBS 101355 / FGSC A1100 / Af293)</name>
    <name type="common">Neosartorya fumigata</name>
    <dbReference type="NCBI Taxonomy" id="330879"/>
    <lineage>
        <taxon>Eukaryota</taxon>
        <taxon>Fungi</taxon>
        <taxon>Dikarya</taxon>
        <taxon>Ascomycota</taxon>
        <taxon>Pezizomycotina</taxon>
        <taxon>Eurotiomycetes</taxon>
        <taxon>Eurotiomycetidae</taxon>
        <taxon>Eurotiales</taxon>
        <taxon>Aspergillaceae</taxon>
        <taxon>Aspergillus</taxon>
        <taxon>Aspergillus subgen. Fumigati</taxon>
    </lineage>
</organism>
<gene>
    <name type="primary">lia1</name>
    <name type="ORF">AFUA_2G05490</name>
</gene>
<feature type="chain" id="PRO_0000283655" description="Deoxyhypusine hydroxylase">
    <location>
        <begin position="1"/>
        <end position="335"/>
    </location>
</feature>
<feature type="repeat" description="HEAT-like PBS-type 1">
    <location>
        <begin position="71"/>
        <end position="97"/>
    </location>
</feature>
<feature type="repeat" description="HEAT-like PBS-type 2">
    <location>
        <begin position="104"/>
        <end position="130"/>
    </location>
</feature>
<feature type="repeat" description="HEAT-like PBS-type 3">
    <location>
        <begin position="200"/>
        <end position="233"/>
    </location>
</feature>
<feature type="repeat" description="HEAT-like PBS-type 4">
    <location>
        <begin position="238"/>
        <end position="264"/>
    </location>
</feature>
<feature type="repeat" description="HEAT-like PBS-type 5">
    <location>
        <begin position="271"/>
        <end position="298"/>
    </location>
</feature>
<feature type="binding site" evidence="1">
    <location>
        <position position="73"/>
    </location>
    <ligand>
        <name>Fe cation</name>
        <dbReference type="ChEBI" id="CHEBI:24875"/>
        <label>1</label>
    </ligand>
</feature>
<feature type="binding site" evidence="1">
    <location>
        <position position="74"/>
    </location>
    <ligand>
        <name>Fe cation</name>
        <dbReference type="ChEBI" id="CHEBI:24875"/>
        <label>1</label>
    </ligand>
</feature>
<feature type="binding site" evidence="1">
    <location>
        <position position="106"/>
    </location>
    <ligand>
        <name>Fe cation</name>
        <dbReference type="ChEBI" id="CHEBI:24875"/>
        <label>1</label>
    </ligand>
</feature>
<feature type="binding site" evidence="1">
    <location>
        <position position="107"/>
    </location>
    <ligand>
        <name>Fe cation</name>
        <dbReference type="ChEBI" id="CHEBI:24875"/>
        <label>1</label>
    </ligand>
</feature>
<feature type="binding site" evidence="1">
    <location>
        <position position="240"/>
    </location>
    <ligand>
        <name>Fe cation</name>
        <dbReference type="ChEBI" id="CHEBI:24875"/>
        <label>2</label>
    </ligand>
</feature>
<feature type="binding site" evidence="1">
    <location>
        <position position="241"/>
    </location>
    <ligand>
        <name>Fe cation</name>
        <dbReference type="ChEBI" id="CHEBI:24875"/>
        <label>2</label>
    </ligand>
</feature>
<feature type="binding site" evidence="1">
    <location>
        <position position="273"/>
    </location>
    <ligand>
        <name>Fe cation</name>
        <dbReference type="ChEBI" id="CHEBI:24875"/>
        <label>2</label>
    </ligand>
</feature>
<feature type="binding site" evidence="1">
    <location>
        <position position="274"/>
    </location>
    <ligand>
        <name>Fe cation</name>
        <dbReference type="ChEBI" id="CHEBI:24875"/>
        <label>2</label>
    </ligand>
</feature>
<reference key="1">
    <citation type="journal article" date="2005" name="Nature">
        <title>Genomic sequence of the pathogenic and allergenic filamentous fungus Aspergillus fumigatus.</title>
        <authorList>
            <person name="Nierman W.C."/>
            <person name="Pain A."/>
            <person name="Anderson M.J."/>
            <person name="Wortman J.R."/>
            <person name="Kim H.S."/>
            <person name="Arroyo J."/>
            <person name="Berriman M."/>
            <person name="Abe K."/>
            <person name="Archer D.B."/>
            <person name="Bermejo C."/>
            <person name="Bennett J.W."/>
            <person name="Bowyer P."/>
            <person name="Chen D."/>
            <person name="Collins M."/>
            <person name="Coulsen R."/>
            <person name="Davies R."/>
            <person name="Dyer P.S."/>
            <person name="Farman M.L."/>
            <person name="Fedorova N."/>
            <person name="Fedorova N.D."/>
            <person name="Feldblyum T.V."/>
            <person name="Fischer R."/>
            <person name="Fosker N."/>
            <person name="Fraser A."/>
            <person name="Garcia J.L."/>
            <person name="Garcia M.J."/>
            <person name="Goble A."/>
            <person name="Goldman G.H."/>
            <person name="Gomi K."/>
            <person name="Griffith-Jones S."/>
            <person name="Gwilliam R."/>
            <person name="Haas B.J."/>
            <person name="Haas H."/>
            <person name="Harris D.E."/>
            <person name="Horiuchi H."/>
            <person name="Huang J."/>
            <person name="Humphray S."/>
            <person name="Jimenez J."/>
            <person name="Keller N."/>
            <person name="Khouri H."/>
            <person name="Kitamoto K."/>
            <person name="Kobayashi T."/>
            <person name="Konzack S."/>
            <person name="Kulkarni R."/>
            <person name="Kumagai T."/>
            <person name="Lafton A."/>
            <person name="Latge J.-P."/>
            <person name="Li W."/>
            <person name="Lord A."/>
            <person name="Lu C."/>
            <person name="Majoros W.H."/>
            <person name="May G.S."/>
            <person name="Miller B.L."/>
            <person name="Mohamoud Y."/>
            <person name="Molina M."/>
            <person name="Monod M."/>
            <person name="Mouyna I."/>
            <person name="Mulligan S."/>
            <person name="Murphy L.D."/>
            <person name="O'Neil S."/>
            <person name="Paulsen I."/>
            <person name="Penalva M.A."/>
            <person name="Pertea M."/>
            <person name="Price C."/>
            <person name="Pritchard B.L."/>
            <person name="Quail M.A."/>
            <person name="Rabbinowitsch E."/>
            <person name="Rawlins N."/>
            <person name="Rajandream M.A."/>
            <person name="Reichard U."/>
            <person name="Renauld H."/>
            <person name="Robson G.D."/>
            <person name="Rodriguez de Cordoba S."/>
            <person name="Rodriguez-Pena J.M."/>
            <person name="Ronning C.M."/>
            <person name="Rutter S."/>
            <person name="Salzberg S.L."/>
            <person name="Sanchez M."/>
            <person name="Sanchez-Ferrero J.C."/>
            <person name="Saunders D."/>
            <person name="Seeger K."/>
            <person name="Squares R."/>
            <person name="Squares S."/>
            <person name="Takeuchi M."/>
            <person name="Tekaia F."/>
            <person name="Turner G."/>
            <person name="Vazquez de Aldana C.R."/>
            <person name="Weidman J."/>
            <person name="White O."/>
            <person name="Woodward J.R."/>
            <person name="Yu J.-H."/>
            <person name="Fraser C.M."/>
            <person name="Galagan J.E."/>
            <person name="Asai K."/>
            <person name="Machida M."/>
            <person name="Hall N."/>
            <person name="Barrell B.G."/>
            <person name="Denning D.W."/>
        </authorList>
    </citation>
    <scope>NUCLEOTIDE SEQUENCE [LARGE SCALE GENOMIC DNA]</scope>
    <source>
        <strain>ATCC MYA-4609 / CBS 101355 / FGSC A1100 / Af293</strain>
    </source>
</reference>
<protein>
    <recommendedName>
        <fullName evidence="1">Deoxyhypusine hydroxylase</fullName>
        <shortName evidence="1">DOHH</shortName>
        <ecNumber evidence="1">1.14.99.29</ecNumber>
    </recommendedName>
    <alternativeName>
        <fullName evidence="1">Deoxyhypusine dioxygenase</fullName>
    </alternativeName>
    <alternativeName>
        <fullName evidence="1">Deoxyhypusine monooxygenase</fullName>
    </alternativeName>
</protein>
<keyword id="KW-0963">Cytoplasm</keyword>
<keyword id="KW-0386">Hypusine biosynthesis</keyword>
<keyword id="KW-0408">Iron</keyword>
<keyword id="KW-0479">Metal-binding</keyword>
<keyword id="KW-0503">Monooxygenase</keyword>
<keyword id="KW-0539">Nucleus</keyword>
<keyword id="KW-0560">Oxidoreductase</keyword>
<keyword id="KW-1185">Reference proteome</keyword>
<keyword id="KW-0677">Repeat</keyword>
<proteinExistence type="inferred from homology"/>
<dbReference type="EC" id="1.14.99.29" evidence="1"/>
<dbReference type="EMBL" id="AAHF01000008">
    <property type="protein sequence ID" value="EAL87640.1"/>
    <property type="status" value="ALT_SEQ"/>
    <property type="molecule type" value="Genomic_DNA"/>
</dbReference>
<dbReference type="RefSeq" id="XP_749678.1">
    <property type="nucleotide sequence ID" value="XM_744585.1"/>
</dbReference>
<dbReference type="SMR" id="Q4WHG5"/>
<dbReference type="FunCoup" id="Q4WHG5">
    <property type="interactions" value="903"/>
</dbReference>
<dbReference type="STRING" id="330879.Q4WHG5"/>
<dbReference type="GeneID" id="3506673"/>
<dbReference type="KEGG" id="afm:AFUA_2G05490"/>
<dbReference type="eggNOG" id="KOG0567">
    <property type="taxonomic scope" value="Eukaryota"/>
</dbReference>
<dbReference type="InParanoid" id="Q4WHG5"/>
<dbReference type="OrthoDB" id="421002at2759"/>
<dbReference type="UniPathway" id="UPA00354"/>
<dbReference type="Proteomes" id="UP000002530">
    <property type="component" value="Chromosome 2"/>
</dbReference>
<dbReference type="GO" id="GO:0005737">
    <property type="term" value="C:cytoplasm"/>
    <property type="evidence" value="ECO:0007669"/>
    <property type="project" value="UniProtKB-SubCell"/>
</dbReference>
<dbReference type="GO" id="GO:0005634">
    <property type="term" value="C:nucleus"/>
    <property type="evidence" value="ECO:0007669"/>
    <property type="project" value="UniProtKB-SubCell"/>
</dbReference>
<dbReference type="GO" id="GO:0019135">
    <property type="term" value="F:deoxyhypusine monooxygenase activity"/>
    <property type="evidence" value="ECO:0000318"/>
    <property type="project" value="GO_Central"/>
</dbReference>
<dbReference type="GO" id="GO:0046872">
    <property type="term" value="F:metal ion binding"/>
    <property type="evidence" value="ECO:0007669"/>
    <property type="project" value="UniProtKB-KW"/>
</dbReference>
<dbReference type="Gene3D" id="1.25.10.10">
    <property type="entry name" value="Leucine-rich Repeat Variant"/>
    <property type="match status" value="2"/>
</dbReference>
<dbReference type="HAMAP" id="MF_03101">
    <property type="entry name" value="Deoxyhypusine_hydroxylase"/>
    <property type="match status" value="1"/>
</dbReference>
<dbReference type="InterPro" id="IPR011989">
    <property type="entry name" value="ARM-like"/>
</dbReference>
<dbReference type="InterPro" id="IPR016024">
    <property type="entry name" value="ARM-type_fold"/>
</dbReference>
<dbReference type="InterPro" id="IPR027517">
    <property type="entry name" value="Deoxyhypusine_hydroxylase"/>
</dbReference>
<dbReference type="InterPro" id="IPR021133">
    <property type="entry name" value="HEAT_type_2"/>
</dbReference>
<dbReference type="InterPro" id="IPR004155">
    <property type="entry name" value="PBS_lyase_HEAT"/>
</dbReference>
<dbReference type="PANTHER" id="PTHR12697:SF5">
    <property type="entry name" value="DEOXYHYPUSINE HYDROXYLASE"/>
    <property type="match status" value="1"/>
</dbReference>
<dbReference type="PANTHER" id="PTHR12697">
    <property type="entry name" value="PBS LYASE HEAT-LIKE PROTEIN"/>
    <property type="match status" value="1"/>
</dbReference>
<dbReference type="Pfam" id="PF13646">
    <property type="entry name" value="HEAT_2"/>
    <property type="match status" value="2"/>
</dbReference>
<dbReference type="SMART" id="SM00567">
    <property type="entry name" value="EZ_HEAT"/>
    <property type="match status" value="6"/>
</dbReference>
<dbReference type="SUPFAM" id="SSF48371">
    <property type="entry name" value="ARM repeat"/>
    <property type="match status" value="1"/>
</dbReference>
<dbReference type="PROSITE" id="PS50077">
    <property type="entry name" value="HEAT_REPEAT"/>
    <property type="match status" value="1"/>
</dbReference>
<comment type="function">
    <text evidence="1">Catalyzes the hydroxylation of the N(6)-(4-aminobutyl)-L-lysine intermediate to form hypusine, an essential post-translational modification only found in mature eIF-5A factor.</text>
</comment>
<comment type="catalytic activity">
    <reaction evidence="1">
        <text>[eIF5A protein]-deoxyhypusine + AH2 + O2 = [eIF5A protein]-hypusine + A + H2O</text>
        <dbReference type="Rhea" id="RHEA:14101"/>
        <dbReference type="Rhea" id="RHEA-COMP:10144"/>
        <dbReference type="Rhea" id="RHEA-COMP:12592"/>
        <dbReference type="ChEBI" id="CHEBI:13193"/>
        <dbReference type="ChEBI" id="CHEBI:15377"/>
        <dbReference type="ChEBI" id="CHEBI:15379"/>
        <dbReference type="ChEBI" id="CHEBI:17499"/>
        <dbReference type="ChEBI" id="CHEBI:82657"/>
        <dbReference type="ChEBI" id="CHEBI:91175"/>
        <dbReference type="EC" id="1.14.99.29"/>
    </reaction>
</comment>
<comment type="cofactor">
    <cofactor evidence="1">
        <name>Fe(2+)</name>
        <dbReference type="ChEBI" id="CHEBI:29033"/>
    </cofactor>
    <text evidence="1">Binds 2 Fe(2+) ions per subunit.</text>
</comment>
<comment type="pathway">
    <text evidence="1">Protein modification; eIF5A hypusination.</text>
</comment>
<comment type="subcellular location">
    <subcellularLocation>
        <location evidence="1">Cytoplasm</location>
    </subcellularLocation>
    <subcellularLocation>
        <location evidence="1">Nucleus</location>
    </subcellularLocation>
</comment>
<comment type="similarity">
    <text evidence="1">Belongs to the deoxyhypusine hydroxylase family.</text>
</comment>
<comment type="sequence caution" evidence="2">
    <conflict type="erroneous gene model prediction">
        <sequence resource="EMBL-CDS" id="EAL87640"/>
    </conflict>
</comment>
<name>DOHH_ASPFU</name>